<gene>
    <name type="primary">Mmp10</name>
</gene>
<comment type="function">
    <text>Can degrade fibronectin, gelatins of type I, III, IV, and V; weakly collagens III, IV, and V. Activates procollagenase.</text>
</comment>
<comment type="catalytic activity">
    <reaction>
        <text>Similar to stromelysin 1, but action on collagen types III, IV and V is weak.</text>
        <dbReference type="EC" id="3.4.24.22"/>
    </reaction>
</comment>
<comment type="cofactor">
    <cofactor evidence="1">
        <name>Zn(2+)</name>
        <dbReference type="ChEBI" id="CHEBI:29105"/>
    </cofactor>
    <text evidence="1">Binds 2 Zn(2+) ions per subunit.</text>
</comment>
<comment type="cofactor">
    <cofactor evidence="1">
        <name>Ca(2+)</name>
        <dbReference type="ChEBI" id="CHEBI:29108"/>
    </cofactor>
</comment>
<comment type="subcellular location">
    <subcellularLocation>
        <location evidence="3">Secreted</location>
        <location evidence="3">Extracellular space</location>
        <location evidence="3">Extracellular matrix</location>
    </subcellularLocation>
</comment>
<comment type="domain">
    <text>The conserved cysteine present in the cysteine-switch motif binds the catalytic zinc ion, thus inhibiting the enzyme. The dissociation of the cysteine from the zinc ion upon the activation-peptide release activates the enzyme.</text>
</comment>
<comment type="similarity">
    <text evidence="3">Belongs to the peptidase M10A family.</text>
</comment>
<sequence>MEPLAILVLLCFPICSAYPLHGAVRQDHSTMDLAQQYLEKYYNFRKNEKQFFKRKDSSPVVKKIEEMQKFLGLEMTGKLDSNTVEMMHKPRCGVPDVGGFSTFPGSPKWRKNHISYRIVNYTLDLPRESVDSAIERALKVWEEVTPLTFSRISEGEADIMISFAVGEHGDFYPFDGVGQSLAHAYPPGPGFYGDAHFDDDEKWSLGPSGTNLFLVAAHELGHSLGLFHSNNKESLMYPVYRFSTSQANIRLSQDDIEGIQSLYGARPSSDATVVPVPSVSPKPETPVKCDPALSFDAVTMLRGEFLFFKDRHFWRRTQWNPEPEFHLISAFWPSLPSGLDAAYEANNKDRVLIFKGSQFWAVRGNEVQAGYPKRIHTLGFPPTVKKIDAAVFEKEKKKTYFFVGDKYWRFDETRQLMDKGFPRLITDDFPGIEPQVDAVLHAFGFFYFFCGSSQFEFDPNARTVTHTLKSNSWLLC</sequence>
<organism>
    <name type="scientific">Rattus norvegicus</name>
    <name type="common">Rat</name>
    <dbReference type="NCBI Taxonomy" id="10116"/>
    <lineage>
        <taxon>Eukaryota</taxon>
        <taxon>Metazoa</taxon>
        <taxon>Chordata</taxon>
        <taxon>Craniata</taxon>
        <taxon>Vertebrata</taxon>
        <taxon>Euteleostomi</taxon>
        <taxon>Mammalia</taxon>
        <taxon>Eutheria</taxon>
        <taxon>Euarchontoglires</taxon>
        <taxon>Glires</taxon>
        <taxon>Rodentia</taxon>
        <taxon>Myomorpha</taxon>
        <taxon>Muroidea</taxon>
        <taxon>Muridae</taxon>
        <taxon>Murinae</taxon>
        <taxon>Rattus</taxon>
    </lineage>
</organism>
<reference key="1">
    <citation type="journal article" date="1987" name="Nucleic Acids Res.">
        <title>Sequences coding for part of oncogene-induced transin are highly conserved in a related rat gene.</title>
        <authorList>
            <person name="Breathnach R."/>
            <person name="Matrisian L.M."/>
            <person name="Gesnel M.-C."/>
            <person name="Staub A."/>
            <person name="Leroy P."/>
        </authorList>
    </citation>
    <scope>NUCLEOTIDE SEQUENCE [MRNA]</scope>
</reference>
<reference key="2">
    <citation type="journal article" date="1992" name="J. Biol. Chem.">
        <title>Molecular cloning and characterization of v-mos-activated transformation-associated proteins.</title>
        <authorList>
            <person name="Chan J.C."/>
            <person name="Scanlon M."/>
            <person name="Zhang H.Z."/>
            <person name="Jia L.B."/>
            <person name="Yu D."/>
            <person name="Hung M.C."/>
            <person name="French M."/>
            <person name="Eastman E.M."/>
        </authorList>
    </citation>
    <scope>NUCLEOTIDE SEQUENCE [MRNA]</scope>
</reference>
<keyword id="KW-0106">Calcium</keyword>
<keyword id="KW-0177">Collagen degradation</keyword>
<keyword id="KW-1015">Disulfide bond</keyword>
<keyword id="KW-0272">Extracellular matrix</keyword>
<keyword id="KW-0378">Hydrolase</keyword>
<keyword id="KW-0479">Metal-binding</keyword>
<keyword id="KW-0482">Metalloprotease</keyword>
<keyword id="KW-0645">Protease</keyword>
<keyword id="KW-1185">Reference proteome</keyword>
<keyword id="KW-0677">Repeat</keyword>
<keyword id="KW-0964">Secreted</keyword>
<keyword id="KW-0732">Signal</keyword>
<keyword id="KW-0862">Zinc</keyword>
<keyword id="KW-0865">Zymogen</keyword>
<protein>
    <recommendedName>
        <fullName>Stromelysin-2</fullName>
        <shortName>SL-2</shortName>
        <ecNumber>3.4.24.22</ecNumber>
    </recommendedName>
    <alternativeName>
        <fullName>Matrix metalloproteinase-10</fullName>
        <shortName>MMP-10</shortName>
    </alternativeName>
    <alternativeName>
        <fullName>Transformation-associated protein 34A</fullName>
    </alternativeName>
    <alternativeName>
        <fullName>Transin-2</fullName>
    </alternativeName>
</protein>
<accession>P07152</accession>
<feature type="signal peptide" evidence="3">
    <location>
        <begin position="1"/>
        <end position="17"/>
    </location>
</feature>
<feature type="propeptide" id="PRO_0000028768" description="Activation peptide" evidence="1">
    <location>
        <begin position="18"/>
        <end position="99"/>
    </location>
</feature>
<feature type="chain" id="PRO_0000028769" description="Stromelysin-2">
    <location>
        <begin position="100"/>
        <end position="476"/>
    </location>
</feature>
<feature type="repeat" description="Hemopexin 1">
    <location>
        <begin position="286"/>
        <end position="335"/>
    </location>
</feature>
<feature type="repeat" description="Hemopexin 2">
    <location>
        <begin position="336"/>
        <end position="382"/>
    </location>
</feature>
<feature type="repeat" description="Hemopexin 3">
    <location>
        <begin position="384"/>
        <end position="432"/>
    </location>
</feature>
<feature type="repeat" description="Hemopexin 4">
    <location>
        <begin position="433"/>
        <end position="476"/>
    </location>
</feature>
<feature type="short sequence motif" description="Cysteine switch" evidence="1">
    <location>
        <begin position="90"/>
        <end position="97"/>
    </location>
</feature>
<feature type="active site" evidence="2">
    <location>
        <position position="219"/>
    </location>
</feature>
<feature type="binding site" description="in inhibited form" evidence="1">
    <location>
        <position position="92"/>
    </location>
    <ligand>
        <name>Zn(2+)</name>
        <dbReference type="ChEBI" id="CHEBI:29105"/>
        <note>catalytic</note>
    </ligand>
</feature>
<feature type="binding site" evidence="1">
    <location>
        <position position="168"/>
    </location>
    <ligand>
        <name>Zn(2+)</name>
        <dbReference type="ChEBI" id="CHEBI:29105"/>
        <label>1</label>
    </ligand>
</feature>
<feature type="binding site" evidence="1">
    <location>
        <position position="170"/>
    </location>
    <ligand>
        <name>Zn(2+)</name>
        <dbReference type="ChEBI" id="CHEBI:29105"/>
        <label>1</label>
    </ligand>
</feature>
<feature type="binding site" evidence="1">
    <location>
        <position position="183"/>
    </location>
    <ligand>
        <name>Zn(2+)</name>
        <dbReference type="ChEBI" id="CHEBI:29105"/>
        <label>1</label>
    </ligand>
</feature>
<feature type="binding site" evidence="1">
    <location>
        <position position="196"/>
    </location>
    <ligand>
        <name>Zn(2+)</name>
        <dbReference type="ChEBI" id="CHEBI:29105"/>
        <label>1</label>
    </ligand>
</feature>
<feature type="binding site" evidence="1">
    <location>
        <position position="218"/>
    </location>
    <ligand>
        <name>Zn(2+)</name>
        <dbReference type="ChEBI" id="CHEBI:29105"/>
        <label>2</label>
        <note>catalytic</note>
    </ligand>
</feature>
<feature type="binding site" evidence="1">
    <location>
        <position position="222"/>
    </location>
    <ligand>
        <name>Zn(2+)</name>
        <dbReference type="ChEBI" id="CHEBI:29105"/>
        <label>2</label>
        <note>catalytic</note>
    </ligand>
</feature>
<feature type="binding site" evidence="1">
    <location>
        <position position="228"/>
    </location>
    <ligand>
        <name>Zn(2+)</name>
        <dbReference type="ChEBI" id="CHEBI:29105"/>
        <label>2</label>
        <note>catalytic</note>
    </ligand>
</feature>
<feature type="disulfide bond" evidence="1">
    <location>
        <begin position="289"/>
        <end position="476"/>
    </location>
</feature>
<evidence type="ECO:0000250" key="1"/>
<evidence type="ECO:0000255" key="2">
    <source>
        <dbReference type="PROSITE-ProRule" id="PRU10095"/>
    </source>
</evidence>
<evidence type="ECO:0000305" key="3"/>
<name>MMP10_RAT</name>
<proteinExistence type="evidence at transcript level"/>
<dbReference type="EC" id="3.4.24.22"/>
<dbReference type="EMBL" id="X05083">
    <property type="protein sequence ID" value="CAA28739.1"/>
    <property type="molecule type" value="mRNA"/>
</dbReference>
<dbReference type="EMBL" id="M65253">
    <property type="protein sequence ID" value="AAA42202.1"/>
    <property type="molecule type" value="mRNA"/>
</dbReference>
<dbReference type="PIR" id="B26403">
    <property type="entry name" value="KCRTS2"/>
</dbReference>
<dbReference type="RefSeq" id="NP_598198.1">
    <property type="nucleotide sequence ID" value="NM_133514.1"/>
</dbReference>
<dbReference type="SMR" id="P07152"/>
<dbReference type="FunCoup" id="P07152">
    <property type="interactions" value="84"/>
</dbReference>
<dbReference type="IntAct" id="P07152">
    <property type="interactions" value="1"/>
</dbReference>
<dbReference type="STRING" id="10116.ENSRNOP00000013118"/>
<dbReference type="MEROPS" id="M10.011"/>
<dbReference type="PhosphoSitePlus" id="P07152"/>
<dbReference type="PaxDb" id="10116-ENSRNOP00000013118"/>
<dbReference type="GeneID" id="117061"/>
<dbReference type="KEGG" id="rno:117061"/>
<dbReference type="UCSC" id="RGD:620192">
    <property type="organism name" value="rat"/>
</dbReference>
<dbReference type="AGR" id="RGD:620192"/>
<dbReference type="CTD" id="4319"/>
<dbReference type="RGD" id="620192">
    <property type="gene designation" value="Mmp10"/>
</dbReference>
<dbReference type="eggNOG" id="KOG1565">
    <property type="taxonomic scope" value="Eukaryota"/>
</dbReference>
<dbReference type="InParanoid" id="P07152"/>
<dbReference type="OrthoDB" id="406838at2759"/>
<dbReference type="PhylomeDB" id="P07152"/>
<dbReference type="Reactome" id="R-RNO-1442490">
    <property type="pathway name" value="Collagen degradation"/>
</dbReference>
<dbReference type="Reactome" id="R-RNO-1474228">
    <property type="pathway name" value="Degradation of the extracellular matrix"/>
</dbReference>
<dbReference type="Reactome" id="R-RNO-1592389">
    <property type="pathway name" value="Activation of Matrix Metalloproteinases"/>
</dbReference>
<dbReference type="PRO" id="PR:P07152"/>
<dbReference type="Proteomes" id="UP000002494">
    <property type="component" value="Unplaced"/>
</dbReference>
<dbReference type="GO" id="GO:0031012">
    <property type="term" value="C:extracellular matrix"/>
    <property type="evidence" value="ECO:0007669"/>
    <property type="project" value="InterPro"/>
</dbReference>
<dbReference type="GO" id="GO:0005576">
    <property type="term" value="C:extracellular region"/>
    <property type="evidence" value="ECO:0007669"/>
    <property type="project" value="UniProtKB-KW"/>
</dbReference>
<dbReference type="GO" id="GO:0004222">
    <property type="term" value="F:metalloendopeptidase activity"/>
    <property type="evidence" value="ECO:0000318"/>
    <property type="project" value="GO_Central"/>
</dbReference>
<dbReference type="GO" id="GO:0008270">
    <property type="term" value="F:zinc ion binding"/>
    <property type="evidence" value="ECO:0007669"/>
    <property type="project" value="InterPro"/>
</dbReference>
<dbReference type="GO" id="GO:0030574">
    <property type="term" value="P:collagen catabolic process"/>
    <property type="evidence" value="ECO:0000318"/>
    <property type="project" value="GO_Central"/>
</dbReference>
<dbReference type="GO" id="GO:0030198">
    <property type="term" value="P:extracellular matrix organization"/>
    <property type="evidence" value="ECO:0000318"/>
    <property type="project" value="GO_Central"/>
</dbReference>
<dbReference type="GO" id="GO:0006508">
    <property type="term" value="P:proteolysis"/>
    <property type="evidence" value="ECO:0007669"/>
    <property type="project" value="UniProtKB-KW"/>
</dbReference>
<dbReference type="GO" id="GO:0030334">
    <property type="term" value="P:regulation of cell migration"/>
    <property type="evidence" value="ECO:0000266"/>
    <property type="project" value="RGD"/>
</dbReference>
<dbReference type="CDD" id="cd00094">
    <property type="entry name" value="HX"/>
    <property type="match status" value="1"/>
</dbReference>
<dbReference type="CDD" id="cd04278">
    <property type="entry name" value="ZnMc_MMP"/>
    <property type="match status" value="1"/>
</dbReference>
<dbReference type="FunFam" id="3.40.390.10:FF:000007">
    <property type="entry name" value="Collagenase 3"/>
    <property type="match status" value="1"/>
</dbReference>
<dbReference type="FunFam" id="2.110.10.10:FF:000002">
    <property type="entry name" value="Matrix metallopeptidase 3"/>
    <property type="match status" value="1"/>
</dbReference>
<dbReference type="Gene3D" id="3.40.390.10">
    <property type="entry name" value="Collagenase (Catalytic Domain)"/>
    <property type="match status" value="1"/>
</dbReference>
<dbReference type="Gene3D" id="2.110.10.10">
    <property type="entry name" value="Hemopexin-like domain"/>
    <property type="match status" value="1"/>
</dbReference>
<dbReference type="InterPro" id="IPR000585">
    <property type="entry name" value="Hemopexin-like_dom"/>
</dbReference>
<dbReference type="InterPro" id="IPR036375">
    <property type="entry name" value="Hemopexin-like_dom_sf"/>
</dbReference>
<dbReference type="InterPro" id="IPR018487">
    <property type="entry name" value="Hemopexin-like_repeat"/>
</dbReference>
<dbReference type="InterPro" id="IPR018486">
    <property type="entry name" value="Hemopexin_CS"/>
</dbReference>
<dbReference type="InterPro" id="IPR033739">
    <property type="entry name" value="M10A_MMP"/>
</dbReference>
<dbReference type="InterPro" id="IPR024079">
    <property type="entry name" value="MetalloPept_cat_dom_sf"/>
</dbReference>
<dbReference type="InterPro" id="IPR001818">
    <property type="entry name" value="Pept_M10_metallopeptidase"/>
</dbReference>
<dbReference type="InterPro" id="IPR021190">
    <property type="entry name" value="Pept_M10A"/>
</dbReference>
<dbReference type="InterPro" id="IPR021158">
    <property type="entry name" value="Pept_M10A_Zn_BS"/>
</dbReference>
<dbReference type="InterPro" id="IPR006026">
    <property type="entry name" value="Peptidase_Metallo"/>
</dbReference>
<dbReference type="InterPro" id="IPR002477">
    <property type="entry name" value="Peptidoglycan-bd-like"/>
</dbReference>
<dbReference type="InterPro" id="IPR036365">
    <property type="entry name" value="PGBD-like_sf"/>
</dbReference>
<dbReference type="PANTHER" id="PTHR10201">
    <property type="entry name" value="MATRIX METALLOPROTEINASE"/>
    <property type="match status" value="1"/>
</dbReference>
<dbReference type="PANTHER" id="PTHR10201:SF129">
    <property type="entry name" value="STROMELYSIN-2"/>
    <property type="match status" value="1"/>
</dbReference>
<dbReference type="Pfam" id="PF00045">
    <property type="entry name" value="Hemopexin"/>
    <property type="match status" value="4"/>
</dbReference>
<dbReference type="Pfam" id="PF00413">
    <property type="entry name" value="Peptidase_M10"/>
    <property type="match status" value="1"/>
</dbReference>
<dbReference type="Pfam" id="PF01471">
    <property type="entry name" value="PG_binding_1"/>
    <property type="match status" value="1"/>
</dbReference>
<dbReference type="PIRSF" id="PIRSF001191">
    <property type="entry name" value="Peptidase_M10A_matrix"/>
    <property type="match status" value="1"/>
</dbReference>
<dbReference type="PRINTS" id="PR00138">
    <property type="entry name" value="MATRIXIN"/>
</dbReference>
<dbReference type="SMART" id="SM00120">
    <property type="entry name" value="HX"/>
    <property type="match status" value="4"/>
</dbReference>
<dbReference type="SMART" id="SM00235">
    <property type="entry name" value="ZnMc"/>
    <property type="match status" value="1"/>
</dbReference>
<dbReference type="SUPFAM" id="SSF50923">
    <property type="entry name" value="Hemopexin-like domain"/>
    <property type="match status" value="1"/>
</dbReference>
<dbReference type="SUPFAM" id="SSF55486">
    <property type="entry name" value="Metalloproteases ('zincins'), catalytic domain"/>
    <property type="match status" value="1"/>
</dbReference>
<dbReference type="SUPFAM" id="SSF47090">
    <property type="entry name" value="PGBD-like"/>
    <property type="match status" value="1"/>
</dbReference>
<dbReference type="PROSITE" id="PS00546">
    <property type="entry name" value="CYSTEINE_SWITCH"/>
    <property type="match status" value="1"/>
</dbReference>
<dbReference type="PROSITE" id="PS00024">
    <property type="entry name" value="HEMOPEXIN"/>
    <property type="match status" value="1"/>
</dbReference>
<dbReference type="PROSITE" id="PS51642">
    <property type="entry name" value="HEMOPEXIN_2"/>
    <property type="match status" value="4"/>
</dbReference>
<dbReference type="PROSITE" id="PS00142">
    <property type="entry name" value="ZINC_PROTEASE"/>
    <property type="match status" value="1"/>
</dbReference>